<gene>
    <name evidence="1" type="primary">fluC3</name>
    <name evidence="1" type="synonym">crcB3</name>
    <name type="ordered locus">BL1092</name>
</gene>
<reference key="1">
    <citation type="journal article" date="2002" name="Proc. Natl. Acad. Sci. U.S.A.">
        <title>The genome sequence of Bifidobacterium longum reflects its adaptation to the human gastrointestinal tract.</title>
        <authorList>
            <person name="Schell M.A."/>
            <person name="Karmirantzou M."/>
            <person name="Snel B."/>
            <person name="Vilanova D."/>
            <person name="Berger B."/>
            <person name="Pessi G."/>
            <person name="Zwahlen M.-C."/>
            <person name="Desiere F."/>
            <person name="Bork P."/>
            <person name="Delley M."/>
            <person name="Pridmore R.D."/>
            <person name="Arigoni F."/>
        </authorList>
    </citation>
    <scope>NUCLEOTIDE SEQUENCE [LARGE SCALE GENOMIC DNA]</scope>
    <source>
        <strain>NCC 2705</strain>
    </source>
</reference>
<comment type="function">
    <text evidence="1">Fluoride-specific ion channel. Important for reducing fluoride concentration in the cell, thus reducing its toxicity.</text>
</comment>
<comment type="catalytic activity">
    <reaction evidence="1">
        <text>fluoride(in) = fluoride(out)</text>
        <dbReference type="Rhea" id="RHEA:76159"/>
        <dbReference type="ChEBI" id="CHEBI:17051"/>
    </reaction>
    <physiologicalReaction direction="left-to-right" evidence="1">
        <dbReference type="Rhea" id="RHEA:76160"/>
    </physiologicalReaction>
</comment>
<comment type="activity regulation">
    <text evidence="1">Na(+) is not transported, but it plays an essential structural role and its presence is essential for fluoride channel function.</text>
</comment>
<comment type="subcellular location">
    <subcellularLocation>
        <location evidence="1">Cell membrane</location>
        <topology evidence="1">Multi-pass membrane protein</topology>
    </subcellularLocation>
</comment>
<comment type="similarity">
    <text evidence="1">Belongs to the fluoride channel Fluc/FEX (TC 1.A.43) family.</text>
</comment>
<evidence type="ECO:0000255" key="1">
    <source>
        <dbReference type="HAMAP-Rule" id="MF_00454"/>
    </source>
</evidence>
<protein>
    <recommendedName>
        <fullName evidence="1">Fluoride-specific ion channel FluC 3</fullName>
    </recommendedName>
</protein>
<accession>Q8G5C2</accession>
<proteinExistence type="inferred from homology"/>
<organism>
    <name type="scientific">Bifidobacterium longum (strain NCC 2705)</name>
    <dbReference type="NCBI Taxonomy" id="206672"/>
    <lineage>
        <taxon>Bacteria</taxon>
        <taxon>Bacillati</taxon>
        <taxon>Actinomycetota</taxon>
        <taxon>Actinomycetes</taxon>
        <taxon>Bifidobacteriales</taxon>
        <taxon>Bifidobacteriaceae</taxon>
        <taxon>Bifidobacterium</taxon>
    </lineage>
</organism>
<feature type="chain" id="PRO_0000110061" description="Fluoride-specific ion channel FluC 3">
    <location>
        <begin position="1"/>
        <end position="121"/>
    </location>
</feature>
<feature type="transmembrane region" description="Helical" evidence="1">
    <location>
        <begin position="3"/>
        <end position="23"/>
    </location>
</feature>
<feature type="transmembrane region" description="Helical" evidence="1">
    <location>
        <begin position="40"/>
        <end position="60"/>
    </location>
</feature>
<feature type="transmembrane region" description="Helical" evidence="1">
    <location>
        <begin position="69"/>
        <end position="89"/>
    </location>
</feature>
<feature type="transmembrane region" description="Helical" evidence="1">
    <location>
        <begin position="101"/>
        <end position="121"/>
    </location>
</feature>
<feature type="binding site" evidence="1">
    <location>
        <position position="76"/>
    </location>
    <ligand>
        <name>Na(+)</name>
        <dbReference type="ChEBI" id="CHEBI:29101"/>
        <note>structural</note>
    </ligand>
</feature>
<feature type="binding site" evidence="1">
    <location>
        <position position="79"/>
    </location>
    <ligand>
        <name>Na(+)</name>
        <dbReference type="ChEBI" id="CHEBI:29101"/>
        <note>structural</note>
    </ligand>
</feature>
<keyword id="KW-1003">Cell membrane</keyword>
<keyword id="KW-0407">Ion channel</keyword>
<keyword id="KW-0406">Ion transport</keyword>
<keyword id="KW-0472">Membrane</keyword>
<keyword id="KW-0479">Metal-binding</keyword>
<keyword id="KW-1185">Reference proteome</keyword>
<keyword id="KW-0915">Sodium</keyword>
<keyword id="KW-0812">Transmembrane</keyword>
<keyword id="KW-1133">Transmembrane helix</keyword>
<keyword id="KW-0813">Transport</keyword>
<sequence length="121" mass="12864">MTVFLPILVCLCGGVGASCRYLLDVTIKTYWQRAFPLSTFTINLIAGFLAGLVAALALGGTLDEPWRLVLATGFLGGFSTFSTAINEMVTLFRKHRYPTAAAYLVLSLGVPVVAAACGFLV</sequence>
<name>FLUC3_BIFLO</name>
<dbReference type="EMBL" id="AE014295">
    <property type="protein sequence ID" value="AAN24900.1"/>
    <property type="molecule type" value="Genomic_DNA"/>
</dbReference>
<dbReference type="RefSeq" id="NP_696264.1">
    <property type="nucleotide sequence ID" value="NC_004307.2"/>
</dbReference>
<dbReference type="RefSeq" id="WP_007053642.1">
    <property type="nucleotide sequence ID" value="NC_004307.2"/>
</dbReference>
<dbReference type="SMR" id="Q8G5C2"/>
<dbReference type="STRING" id="206672.BL1092"/>
<dbReference type="EnsemblBacteria" id="AAN24900">
    <property type="protein sequence ID" value="AAN24900"/>
    <property type="gene ID" value="BL1092"/>
</dbReference>
<dbReference type="KEGG" id="blo:BL1092"/>
<dbReference type="PATRIC" id="fig|206672.9.peg.799"/>
<dbReference type="HOGENOM" id="CLU_114342_2_0_11"/>
<dbReference type="OrthoDB" id="5148600at2"/>
<dbReference type="PhylomeDB" id="Q8G5C2"/>
<dbReference type="Proteomes" id="UP000000439">
    <property type="component" value="Chromosome"/>
</dbReference>
<dbReference type="GO" id="GO:0005886">
    <property type="term" value="C:plasma membrane"/>
    <property type="evidence" value="ECO:0007669"/>
    <property type="project" value="UniProtKB-SubCell"/>
</dbReference>
<dbReference type="GO" id="GO:0062054">
    <property type="term" value="F:fluoride channel activity"/>
    <property type="evidence" value="ECO:0007669"/>
    <property type="project" value="UniProtKB-UniRule"/>
</dbReference>
<dbReference type="GO" id="GO:0046872">
    <property type="term" value="F:metal ion binding"/>
    <property type="evidence" value="ECO:0007669"/>
    <property type="project" value="UniProtKB-KW"/>
</dbReference>
<dbReference type="GO" id="GO:0140114">
    <property type="term" value="P:cellular detoxification of fluoride"/>
    <property type="evidence" value="ECO:0007669"/>
    <property type="project" value="UniProtKB-UniRule"/>
</dbReference>
<dbReference type="HAMAP" id="MF_00454">
    <property type="entry name" value="FluC"/>
    <property type="match status" value="1"/>
</dbReference>
<dbReference type="InterPro" id="IPR003691">
    <property type="entry name" value="FluC"/>
</dbReference>
<dbReference type="PANTHER" id="PTHR28259">
    <property type="entry name" value="FLUORIDE EXPORT PROTEIN 1-RELATED"/>
    <property type="match status" value="1"/>
</dbReference>
<dbReference type="PANTHER" id="PTHR28259:SF1">
    <property type="entry name" value="FLUORIDE EXPORT PROTEIN 1-RELATED"/>
    <property type="match status" value="1"/>
</dbReference>
<dbReference type="Pfam" id="PF02537">
    <property type="entry name" value="CRCB"/>
    <property type="match status" value="1"/>
</dbReference>